<proteinExistence type="inferred from homology"/>
<feature type="chain" id="PRO_1000186673" description="4-hydroxybenzoate octaprenyltransferase">
    <location>
        <begin position="1"/>
        <end position="290"/>
    </location>
</feature>
<feature type="transmembrane region" description="Helical" evidence="1">
    <location>
        <begin position="23"/>
        <end position="43"/>
    </location>
</feature>
<feature type="transmembrane region" description="Helical" evidence="1">
    <location>
        <begin position="46"/>
        <end position="66"/>
    </location>
</feature>
<feature type="transmembrane region" description="Helical" evidence="1">
    <location>
        <begin position="99"/>
        <end position="119"/>
    </location>
</feature>
<feature type="transmembrane region" description="Helical" evidence="1">
    <location>
        <begin position="141"/>
        <end position="161"/>
    </location>
</feature>
<feature type="transmembrane region" description="Helical" evidence="1">
    <location>
        <begin position="163"/>
        <end position="183"/>
    </location>
</feature>
<feature type="transmembrane region" description="Helical" evidence="1">
    <location>
        <begin position="213"/>
        <end position="233"/>
    </location>
</feature>
<feature type="transmembrane region" description="Helical" evidence="1">
    <location>
        <begin position="234"/>
        <end position="254"/>
    </location>
</feature>
<feature type="transmembrane region" description="Helical" evidence="1">
    <location>
        <begin position="268"/>
        <end position="288"/>
    </location>
</feature>
<accession>B1LPK5</accession>
<evidence type="ECO:0000255" key="1">
    <source>
        <dbReference type="HAMAP-Rule" id="MF_01635"/>
    </source>
</evidence>
<sequence length="290" mass="32512">MEWSLTQNKLLAFHRLMRTDKPIGALLLLWPTLWALWVATPGVPQLWILAVFVAGVWLMRAAGCVVNDYADRKFDGHVKRTANRPLPSGAVTEKEARALFVVLVLISFLLVLTLNTMTILLSIAALALAWVYPFMKRYTHLPQVVLGAAFGWSIPMAFAAVSESVPLSCWLMFLANILWAVAYDTQYAMVDRDDDVKIGIKSTAILFGQYDKLIIGILQIGVLALMAIIGELNGLGWGYYWSILVAGALFVYQQKLIANREREACFKAFMNNNYVGLVLFLGLAMSYWHF</sequence>
<name>UBIA_ECOSM</name>
<gene>
    <name evidence="1" type="primary">ubiA</name>
    <name type="ordered locus">EcSMS35_4502</name>
</gene>
<keyword id="KW-0997">Cell inner membrane</keyword>
<keyword id="KW-1003">Cell membrane</keyword>
<keyword id="KW-0460">Magnesium</keyword>
<keyword id="KW-0472">Membrane</keyword>
<keyword id="KW-0808">Transferase</keyword>
<keyword id="KW-0812">Transmembrane</keyword>
<keyword id="KW-1133">Transmembrane helix</keyword>
<keyword id="KW-0831">Ubiquinone biosynthesis</keyword>
<protein>
    <recommendedName>
        <fullName evidence="1">4-hydroxybenzoate octaprenyltransferase</fullName>
        <ecNumber evidence="1">2.5.1.39</ecNumber>
    </recommendedName>
    <alternativeName>
        <fullName evidence="1">4-HB polyprenyltransferase</fullName>
    </alternativeName>
</protein>
<reference key="1">
    <citation type="journal article" date="2008" name="J. Bacteriol.">
        <title>Insights into the environmental resistance gene pool from the genome sequence of the multidrug-resistant environmental isolate Escherichia coli SMS-3-5.</title>
        <authorList>
            <person name="Fricke W.F."/>
            <person name="Wright M.S."/>
            <person name="Lindell A.H."/>
            <person name="Harkins D.M."/>
            <person name="Baker-Austin C."/>
            <person name="Ravel J."/>
            <person name="Stepanauskas R."/>
        </authorList>
    </citation>
    <scope>NUCLEOTIDE SEQUENCE [LARGE SCALE GENOMIC DNA]</scope>
    <source>
        <strain>SMS-3-5 / SECEC</strain>
    </source>
</reference>
<dbReference type="EC" id="2.5.1.39" evidence="1"/>
<dbReference type="EMBL" id="CP000970">
    <property type="protein sequence ID" value="ACB17390.1"/>
    <property type="molecule type" value="Genomic_DNA"/>
</dbReference>
<dbReference type="RefSeq" id="WP_000455227.1">
    <property type="nucleotide sequence ID" value="NC_010498.1"/>
</dbReference>
<dbReference type="SMR" id="B1LPK5"/>
<dbReference type="GeneID" id="93777791"/>
<dbReference type="KEGG" id="ecm:EcSMS35_4502"/>
<dbReference type="HOGENOM" id="CLU_034879_1_0_6"/>
<dbReference type="UniPathway" id="UPA00232"/>
<dbReference type="Proteomes" id="UP000007011">
    <property type="component" value="Chromosome"/>
</dbReference>
<dbReference type="GO" id="GO:0005886">
    <property type="term" value="C:plasma membrane"/>
    <property type="evidence" value="ECO:0007669"/>
    <property type="project" value="UniProtKB-SubCell"/>
</dbReference>
<dbReference type="GO" id="GO:0008412">
    <property type="term" value="F:4-hydroxybenzoate polyprenyltransferase activity"/>
    <property type="evidence" value="ECO:0007669"/>
    <property type="project" value="UniProtKB-UniRule"/>
</dbReference>
<dbReference type="GO" id="GO:0006744">
    <property type="term" value="P:ubiquinone biosynthetic process"/>
    <property type="evidence" value="ECO:0007669"/>
    <property type="project" value="UniProtKB-UniRule"/>
</dbReference>
<dbReference type="CDD" id="cd13959">
    <property type="entry name" value="PT_UbiA_COQ2"/>
    <property type="match status" value="1"/>
</dbReference>
<dbReference type="FunFam" id="1.10.357.140:FF:000002">
    <property type="entry name" value="4-hydroxybenzoate octaprenyltransferase"/>
    <property type="match status" value="1"/>
</dbReference>
<dbReference type="FunFam" id="1.20.120.1780:FF:000001">
    <property type="entry name" value="4-hydroxybenzoate octaprenyltransferase"/>
    <property type="match status" value="1"/>
</dbReference>
<dbReference type="Gene3D" id="1.10.357.140">
    <property type="entry name" value="UbiA prenyltransferase"/>
    <property type="match status" value="1"/>
</dbReference>
<dbReference type="Gene3D" id="1.20.120.1780">
    <property type="entry name" value="UbiA prenyltransferase"/>
    <property type="match status" value="1"/>
</dbReference>
<dbReference type="HAMAP" id="MF_01635">
    <property type="entry name" value="UbiA"/>
    <property type="match status" value="1"/>
</dbReference>
<dbReference type="InterPro" id="IPR006370">
    <property type="entry name" value="HB_polyprenyltransferase-like"/>
</dbReference>
<dbReference type="InterPro" id="IPR039653">
    <property type="entry name" value="Prenyltransferase"/>
</dbReference>
<dbReference type="InterPro" id="IPR000537">
    <property type="entry name" value="UbiA_prenyltransferase"/>
</dbReference>
<dbReference type="InterPro" id="IPR030470">
    <property type="entry name" value="UbiA_prenylTrfase_CS"/>
</dbReference>
<dbReference type="InterPro" id="IPR044878">
    <property type="entry name" value="UbiA_sf"/>
</dbReference>
<dbReference type="NCBIfam" id="TIGR01474">
    <property type="entry name" value="ubiA_proteo"/>
    <property type="match status" value="1"/>
</dbReference>
<dbReference type="PANTHER" id="PTHR11048:SF28">
    <property type="entry name" value="4-HYDROXYBENZOATE POLYPRENYLTRANSFERASE, MITOCHONDRIAL"/>
    <property type="match status" value="1"/>
</dbReference>
<dbReference type="PANTHER" id="PTHR11048">
    <property type="entry name" value="PRENYLTRANSFERASES"/>
    <property type="match status" value="1"/>
</dbReference>
<dbReference type="Pfam" id="PF01040">
    <property type="entry name" value="UbiA"/>
    <property type="match status" value="1"/>
</dbReference>
<dbReference type="PROSITE" id="PS00943">
    <property type="entry name" value="UBIA"/>
    <property type="match status" value="1"/>
</dbReference>
<comment type="function">
    <text evidence="1">Catalyzes the prenylation of para-hydroxybenzoate (PHB) with an all-trans polyprenyl group. Mediates the second step in the final reaction sequence of ubiquinone-8 (UQ-8) biosynthesis, which is the condensation of the polyisoprenoid side chain with PHB, generating the first membrane-bound Q intermediate 3-octaprenyl-4-hydroxybenzoate.</text>
</comment>
<comment type="catalytic activity">
    <reaction evidence="1">
        <text>all-trans-octaprenyl diphosphate + 4-hydroxybenzoate = 4-hydroxy-3-(all-trans-octaprenyl)benzoate + diphosphate</text>
        <dbReference type="Rhea" id="RHEA:27782"/>
        <dbReference type="ChEBI" id="CHEBI:1617"/>
        <dbReference type="ChEBI" id="CHEBI:17879"/>
        <dbReference type="ChEBI" id="CHEBI:33019"/>
        <dbReference type="ChEBI" id="CHEBI:57711"/>
        <dbReference type="EC" id="2.5.1.39"/>
    </reaction>
</comment>
<comment type="cofactor">
    <cofactor evidence="1">
        <name>Mg(2+)</name>
        <dbReference type="ChEBI" id="CHEBI:18420"/>
    </cofactor>
</comment>
<comment type="pathway">
    <text evidence="1">Cofactor biosynthesis; ubiquinone biosynthesis.</text>
</comment>
<comment type="subcellular location">
    <subcellularLocation>
        <location evidence="1">Cell inner membrane</location>
        <topology evidence="1">Multi-pass membrane protein</topology>
    </subcellularLocation>
</comment>
<comment type="similarity">
    <text evidence="1">Belongs to the UbiA prenyltransferase family.</text>
</comment>
<organism>
    <name type="scientific">Escherichia coli (strain SMS-3-5 / SECEC)</name>
    <dbReference type="NCBI Taxonomy" id="439855"/>
    <lineage>
        <taxon>Bacteria</taxon>
        <taxon>Pseudomonadati</taxon>
        <taxon>Pseudomonadota</taxon>
        <taxon>Gammaproteobacteria</taxon>
        <taxon>Enterobacterales</taxon>
        <taxon>Enterobacteriaceae</taxon>
        <taxon>Escherichia</taxon>
    </lineage>
</organism>